<organism>
    <name type="scientific">Homo sapiens</name>
    <name type="common">Human</name>
    <dbReference type="NCBI Taxonomy" id="9606"/>
    <lineage>
        <taxon>Eukaryota</taxon>
        <taxon>Metazoa</taxon>
        <taxon>Chordata</taxon>
        <taxon>Craniata</taxon>
        <taxon>Vertebrata</taxon>
        <taxon>Euteleostomi</taxon>
        <taxon>Mammalia</taxon>
        <taxon>Eutheria</taxon>
        <taxon>Euarchontoglires</taxon>
        <taxon>Primates</taxon>
        <taxon>Haplorrhini</taxon>
        <taxon>Catarrhini</taxon>
        <taxon>Hominidae</taxon>
        <taxon>Homo</taxon>
    </lineage>
</organism>
<evidence type="ECO:0000255" key="1">
    <source>
        <dbReference type="PROSITE-ProRule" id="PRU00238"/>
    </source>
</evidence>
<evidence type="ECO:0000269" key="2">
    <source>
    </source>
</evidence>
<evidence type="ECO:0000269" key="3">
    <source>
    </source>
</evidence>
<evidence type="ECO:0000269" key="4">
    <source>
    </source>
</evidence>
<evidence type="ECO:0000269" key="5">
    <source>
    </source>
</evidence>
<evidence type="ECO:0000269" key="6">
    <source>
    </source>
</evidence>
<evidence type="ECO:0000269" key="7">
    <source>
    </source>
</evidence>
<evidence type="ECO:0000269" key="8">
    <source>
    </source>
</evidence>
<evidence type="ECO:0000269" key="9">
    <source>
    </source>
</evidence>
<evidence type="ECO:0000269" key="10">
    <source>
    </source>
</evidence>
<evidence type="ECO:0000269" key="11">
    <source>
    </source>
</evidence>
<evidence type="ECO:0000269" key="12">
    <source>
    </source>
</evidence>
<evidence type="ECO:0000269" key="13">
    <source>
    </source>
</evidence>
<evidence type="ECO:0000269" key="14">
    <source>
    </source>
</evidence>
<evidence type="ECO:0000269" key="15">
    <source>
    </source>
</evidence>
<evidence type="ECO:0000269" key="16">
    <source>
    </source>
</evidence>
<evidence type="ECO:0000269" key="17">
    <source>
    </source>
</evidence>
<evidence type="ECO:0000269" key="18">
    <source>
    </source>
</evidence>
<evidence type="ECO:0000303" key="19">
    <source>
    </source>
</evidence>
<evidence type="ECO:0000303" key="20">
    <source>
    </source>
</evidence>
<evidence type="ECO:0000303" key="21">
    <source>
    </source>
</evidence>
<evidence type="ECO:0000303" key="22">
    <source>
    </source>
</evidence>
<evidence type="ECO:0000305" key="23"/>
<evidence type="ECO:0000305" key="24">
    <source>
    </source>
</evidence>
<evidence type="ECO:0000305" key="25">
    <source>
    </source>
</evidence>
<evidence type="ECO:0000305" key="26">
    <source>
    </source>
</evidence>
<evidence type="ECO:0000305" key="27">
    <source>
    </source>
</evidence>
<evidence type="ECO:0000312" key="28">
    <source>
        <dbReference type="HGNC" id="HGNC:16505"/>
    </source>
</evidence>
<evidence type="ECO:0007744" key="29">
    <source>
        <dbReference type="PDB" id="1UMO"/>
    </source>
</evidence>
<evidence type="ECO:0007744" key="30">
    <source>
        <dbReference type="PDB" id="1URV"/>
    </source>
</evidence>
<evidence type="ECO:0007744" key="31">
    <source>
        <dbReference type="PDB" id="1URY"/>
    </source>
</evidence>
<evidence type="ECO:0007744" key="32">
    <source>
        <dbReference type="PDB" id="1UT0"/>
    </source>
</evidence>
<evidence type="ECO:0007744" key="33">
    <source>
        <dbReference type="PDB" id="1UX9"/>
    </source>
</evidence>
<evidence type="ECO:0007744" key="34">
    <source>
        <dbReference type="PDB" id="1V5H"/>
    </source>
</evidence>
<evidence type="ECO:0007744" key="35">
    <source>
        <dbReference type="PDB" id="2DC3"/>
    </source>
</evidence>
<evidence type="ECO:0007829" key="36">
    <source>
        <dbReference type="PDB" id="2DC3"/>
    </source>
</evidence>
<proteinExistence type="evidence at protein level"/>
<keyword id="KW-0002">3D-structure</keyword>
<keyword id="KW-0963">Cytoplasm</keyword>
<keyword id="KW-1015">Disulfide bond</keyword>
<keyword id="KW-0349">Heme</keyword>
<keyword id="KW-0408">Iron</keyword>
<keyword id="KW-0479">Metal-binding</keyword>
<keyword id="KW-0539">Nucleus</keyword>
<keyword id="KW-0560">Oxidoreductase</keyword>
<keyword id="KW-1267">Proteomics identification</keyword>
<keyword id="KW-1185">Reference proteome</keyword>
<sequence length="190" mass="21405">MEKVPGEMEIERRERSEELSEAERKAVQAMWARLYANCEDVGVAILVRFFVNFPSAKQYFSQFKHMEDPLEMERSPQLRKHACRVMGALNTVVENLHDPDKVSSVLALVGKAHALKHKVEPVYFKILSGVILEVVAEEFASDFPPETQRAWAKLRGLIYSHVTAAYKEVGWVQQVPNATTPPATLPSSGP</sequence>
<gene>
    <name evidence="28" type="primary">CYGB</name>
    <name evidence="21" type="synonym">STAP</name>
</gene>
<name>CYGB_HUMAN</name>
<accession>Q8WWM9</accession>
<accession>Q541Y7</accession>
<accession>Q8N2X5</accession>
<dbReference type="EC" id="1.14.12.-" evidence="12"/>
<dbReference type="EC" id="1.7.-.-" evidence="16"/>
<dbReference type="EC" id="1.11.1.-" evidence="4"/>
<dbReference type="EC" id="1.15.1.1" evidence="18"/>
<dbReference type="EMBL" id="AJ315162">
    <property type="protein sequence ID" value="CAC86186.1"/>
    <property type="molecule type" value="mRNA"/>
</dbReference>
<dbReference type="EMBL" id="AB057769">
    <property type="protein sequence ID" value="BAB87840.1"/>
    <property type="molecule type" value="mRNA"/>
</dbReference>
<dbReference type="EMBL" id="AK098057">
    <property type="protein sequence ID" value="BAC05223.1"/>
    <property type="molecule type" value="mRNA"/>
</dbReference>
<dbReference type="EMBL" id="CH471099">
    <property type="protein sequence ID" value="EAW89406.1"/>
    <property type="molecule type" value="Genomic_DNA"/>
</dbReference>
<dbReference type="EMBL" id="BC029798">
    <property type="protein sequence ID" value="AAH29798.1"/>
    <property type="molecule type" value="mRNA"/>
</dbReference>
<dbReference type="CCDS" id="CCDS11746.1"/>
<dbReference type="RefSeq" id="NP_599030.1">
    <property type="nucleotide sequence ID" value="NM_134268.5"/>
</dbReference>
<dbReference type="PDB" id="1UMO">
    <property type="method" value="X-ray"/>
    <property type="resolution" value="2.59 A"/>
    <property type="chains" value="A/B=1-190"/>
</dbReference>
<dbReference type="PDB" id="1URV">
    <property type="method" value="X-ray"/>
    <property type="resolution" value="2.00 A"/>
    <property type="chains" value="A/B=1-190"/>
</dbReference>
<dbReference type="PDB" id="1URY">
    <property type="method" value="X-ray"/>
    <property type="resolution" value="2.40 A"/>
    <property type="chains" value="A/B=1-190"/>
</dbReference>
<dbReference type="PDB" id="1UT0">
    <property type="method" value="X-ray"/>
    <property type="resolution" value="2.10 A"/>
    <property type="chains" value="A/B=1-190"/>
</dbReference>
<dbReference type="PDB" id="1UX9">
    <property type="method" value="X-ray"/>
    <property type="resolution" value="2.40 A"/>
    <property type="chains" value="A/B=1-190"/>
</dbReference>
<dbReference type="PDB" id="1V5H">
    <property type="method" value="X-ray"/>
    <property type="resolution" value="2.40 A"/>
    <property type="chains" value="A=1-190"/>
</dbReference>
<dbReference type="PDB" id="2DC3">
    <property type="method" value="X-ray"/>
    <property type="resolution" value="1.68 A"/>
    <property type="chains" value="A/B=1-190"/>
</dbReference>
<dbReference type="PDB" id="3AG0">
    <property type="method" value="X-ray"/>
    <property type="resolution" value="2.60 A"/>
    <property type="chains" value="A=1-190"/>
</dbReference>
<dbReference type="PDB" id="4B3W">
    <property type="method" value="X-ray"/>
    <property type="resolution" value="2.80 A"/>
    <property type="chains" value="A/B=1-190"/>
</dbReference>
<dbReference type="PDBsum" id="1UMO"/>
<dbReference type="PDBsum" id="1URV"/>
<dbReference type="PDBsum" id="1URY"/>
<dbReference type="PDBsum" id="1UT0"/>
<dbReference type="PDBsum" id="1UX9"/>
<dbReference type="PDBsum" id="1V5H"/>
<dbReference type="PDBsum" id="2DC3"/>
<dbReference type="PDBsum" id="3AG0"/>
<dbReference type="PDBsum" id="4B3W"/>
<dbReference type="SMR" id="Q8WWM9"/>
<dbReference type="BioGRID" id="125335">
    <property type="interactions" value="14"/>
</dbReference>
<dbReference type="FunCoup" id="Q8WWM9">
    <property type="interactions" value="550"/>
</dbReference>
<dbReference type="IntAct" id="Q8WWM9">
    <property type="interactions" value="13"/>
</dbReference>
<dbReference type="STRING" id="9606.ENSP00000293230"/>
<dbReference type="TCDB" id="1.A.107.1.5">
    <property type="family name" value="the pore-forming globin (globin) family"/>
</dbReference>
<dbReference type="GlyGen" id="Q8WWM9">
    <property type="glycosylation" value="1 site"/>
</dbReference>
<dbReference type="iPTMnet" id="Q8WWM9"/>
<dbReference type="PhosphoSitePlus" id="Q8WWM9"/>
<dbReference type="BioMuta" id="CYGB"/>
<dbReference type="DMDM" id="21263504"/>
<dbReference type="jPOST" id="Q8WWM9"/>
<dbReference type="MassIVE" id="Q8WWM9"/>
<dbReference type="PaxDb" id="9606-ENSP00000293230"/>
<dbReference type="PeptideAtlas" id="Q8WWM9"/>
<dbReference type="ProteomicsDB" id="74913"/>
<dbReference type="Antibodypedia" id="2901">
    <property type="antibodies" value="324 antibodies from 32 providers"/>
</dbReference>
<dbReference type="DNASU" id="114757"/>
<dbReference type="Ensembl" id="ENST00000293230.10">
    <property type="protein sequence ID" value="ENSP00000293230.4"/>
    <property type="gene ID" value="ENSG00000161544.10"/>
</dbReference>
<dbReference type="GeneID" id="114757"/>
<dbReference type="KEGG" id="hsa:114757"/>
<dbReference type="MANE-Select" id="ENST00000293230.10">
    <property type="protein sequence ID" value="ENSP00000293230.4"/>
    <property type="RefSeq nucleotide sequence ID" value="NM_134268.5"/>
    <property type="RefSeq protein sequence ID" value="NP_599030.1"/>
</dbReference>
<dbReference type="UCSC" id="uc002jru.3">
    <property type="organism name" value="human"/>
</dbReference>
<dbReference type="AGR" id="HGNC:16505"/>
<dbReference type="CTD" id="114757"/>
<dbReference type="DisGeNET" id="114757"/>
<dbReference type="GeneCards" id="CYGB"/>
<dbReference type="HGNC" id="HGNC:16505">
    <property type="gene designation" value="CYGB"/>
</dbReference>
<dbReference type="HPA" id="ENSG00000161544">
    <property type="expression patterns" value="Tissue enhanced (heart)"/>
</dbReference>
<dbReference type="MalaCards" id="CYGB"/>
<dbReference type="MIM" id="608759">
    <property type="type" value="gene"/>
</dbReference>
<dbReference type="neXtProt" id="NX_Q8WWM9"/>
<dbReference type="OpenTargets" id="ENSG00000161544"/>
<dbReference type="PharmGKB" id="PA27080"/>
<dbReference type="VEuPathDB" id="HostDB:ENSG00000161544"/>
<dbReference type="eggNOG" id="KOG3378">
    <property type="taxonomic scope" value="Eukaryota"/>
</dbReference>
<dbReference type="GeneTree" id="ENSGT00940000155004"/>
<dbReference type="HOGENOM" id="CLU_003827_10_1_1"/>
<dbReference type="InParanoid" id="Q8WWM9"/>
<dbReference type="OMA" id="TWARVYE"/>
<dbReference type="OrthoDB" id="436496at2759"/>
<dbReference type="PAN-GO" id="Q8WWM9">
    <property type="GO annotations" value="0 GO annotations based on evolutionary models"/>
</dbReference>
<dbReference type="PhylomeDB" id="Q8WWM9"/>
<dbReference type="TreeFam" id="TF332967"/>
<dbReference type="PathwayCommons" id="Q8WWM9"/>
<dbReference type="Reactome" id="R-HSA-203615">
    <property type="pathway name" value="eNOS activation"/>
</dbReference>
<dbReference type="Reactome" id="R-HSA-8981607">
    <property type="pathway name" value="Intracellular oxygen transport"/>
</dbReference>
<dbReference type="SignaLink" id="Q8WWM9"/>
<dbReference type="SIGNOR" id="Q8WWM9"/>
<dbReference type="BioGRID-ORCS" id="114757">
    <property type="hits" value="11 hits in 1145 CRISPR screens"/>
</dbReference>
<dbReference type="ChiTaRS" id="CYGB">
    <property type="organism name" value="human"/>
</dbReference>
<dbReference type="EvolutionaryTrace" id="Q8WWM9"/>
<dbReference type="GeneWiki" id="Cytoglobin"/>
<dbReference type="GenomeRNAi" id="114757"/>
<dbReference type="Pharos" id="Q8WWM9">
    <property type="development level" value="Tbio"/>
</dbReference>
<dbReference type="PRO" id="PR:Q8WWM9"/>
<dbReference type="Proteomes" id="UP000005640">
    <property type="component" value="Chromosome 17"/>
</dbReference>
<dbReference type="RNAct" id="Q8WWM9">
    <property type="molecule type" value="protein"/>
</dbReference>
<dbReference type="Bgee" id="ENSG00000161544">
    <property type="expression patterns" value="Expressed in cardiac muscle of right atrium and 151 other cell types or tissues"/>
</dbReference>
<dbReference type="ExpressionAtlas" id="Q8WWM9">
    <property type="expression patterns" value="baseline and differential"/>
</dbReference>
<dbReference type="GO" id="GO:0005737">
    <property type="term" value="C:cytoplasm"/>
    <property type="evidence" value="ECO:0000314"/>
    <property type="project" value="UniProtKB"/>
</dbReference>
<dbReference type="GO" id="GO:0005829">
    <property type="term" value="C:cytosol"/>
    <property type="evidence" value="ECO:0000314"/>
    <property type="project" value="HPA"/>
</dbReference>
<dbReference type="GO" id="GO:0043005">
    <property type="term" value="C:neuron projection"/>
    <property type="evidence" value="ECO:0007669"/>
    <property type="project" value="Ensembl"/>
</dbReference>
<dbReference type="GO" id="GO:0043025">
    <property type="term" value="C:neuronal cell body"/>
    <property type="evidence" value="ECO:0007669"/>
    <property type="project" value="Ensembl"/>
</dbReference>
<dbReference type="GO" id="GO:0016607">
    <property type="term" value="C:nuclear speck"/>
    <property type="evidence" value="ECO:0000314"/>
    <property type="project" value="HPA"/>
</dbReference>
<dbReference type="GO" id="GO:0005634">
    <property type="term" value="C:nucleus"/>
    <property type="evidence" value="ECO:0000314"/>
    <property type="project" value="UniProtKB"/>
</dbReference>
<dbReference type="GO" id="GO:0070025">
    <property type="term" value="F:carbon monoxide binding"/>
    <property type="evidence" value="ECO:0000314"/>
    <property type="project" value="UniProtKB"/>
</dbReference>
<dbReference type="GO" id="GO:0004096">
    <property type="term" value="F:catalase activity"/>
    <property type="evidence" value="ECO:0007669"/>
    <property type="project" value="Ensembl"/>
</dbReference>
<dbReference type="GO" id="GO:0047888">
    <property type="term" value="F:fatty acid peroxidase activity"/>
    <property type="evidence" value="ECO:0007669"/>
    <property type="project" value="Ensembl"/>
</dbReference>
<dbReference type="GO" id="GO:0020037">
    <property type="term" value="F:heme binding"/>
    <property type="evidence" value="ECO:0000318"/>
    <property type="project" value="GO_Central"/>
</dbReference>
<dbReference type="GO" id="GO:0005506">
    <property type="term" value="F:iron ion binding"/>
    <property type="evidence" value="ECO:0007669"/>
    <property type="project" value="InterPro"/>
</dbReference>
<dbReference type="GO" id="GO:0141118">
    <property type="term" value="F:nitric oxide dioxygenase activity, heme protein as donor"/>
    <property type="evidence" value="ECO:0000314"/>
    <property type="project" value="UniProtKB"/>
</dbReference>
<dbReference type="GO" id="GO:0098809">
    <property type="term" value="F:nitrite reductase activity"/>
    <property type="evidence" value="ECO:0000314"/>
    <property type="project" value="UniProtKB"/>
</dbReference>
<dbReference type="GO" id="GO:0016491">
    <property type="term" value="F:oxidoreductase activity"/>
    <property type="evidence" value="ECO:0000318"/>
    <property type="project" value="GO_Central"/>
</dbReference>
<dbReference type="GO" id="GO:0019825">
    <property type="term" value="F:oxygen binding"/>
    <property type="evidence" value="ECO:0000314"/>
    <property type="project" value="UniProtKB"/>
</dbReference>
<dbReference type="GO" id="GO:0005344">
    <property type="term" value="F:oxygen carrier activity"/>
    <property type="evidence" value="ECO:0000303"/>
    <property type="project" value="UniProtKB"/>
</dbReference>
<dbReference type="GO" id="GO:0004601">
    <property type="term" value="F:peroxidase activity"/>
    <property type="evidence" value="ECO:0000250"/>
    <property type="project" value="UniProtKB"/>
</dbReference>
<dbReference type="GO" id="GO:0004784">
    <property type="term" value="F:superoxide dismutase activity"/>
    <property type="evidence" value="ECO:0000314"/>
    <property type="project" value="UniProtKB"/>
</dbReference>
<dbReference type="GO" id="GO:0019395">
    <property type="term" value="P:fatty acid oxidation"/>
    <property type="evidence" value="ECO:0007669"/>
    <property type="project" value="Ensembl"/>
</dbReference>
<dbReference type="GO" id="GO:0032966">
    <property type="term" value="P:negative regulation of collagen biosynthetic process"/>
    <property type="evidence" value="ECO:0007669"/>
    <property type="project" value="Ensembl"/>
</dbReference>
<dbReference type="GO" id="GO:0010764">
    <property type="term" value="P:negative regulation of fibroblast migration"/>
    <property type="evidence" value="ECO:0007669"/>
    <property type="project" value="Ensembl"/>
</dbReference>
<dbReference type="GO" id="GO:2000490">
    <property type="term" value="P:negative regulation of hepatic stellate cell activation"/>
    <property type="evidence" value="ECO:0007669"/>
    <property type="project" value="Ensembl"/>
</dbReference>
<dbReference type="GO" id="GO:0046210">
    <property type="term" value="P:nitric oxide catabolic process"/>
    <property type="evidence" value="ECO:0000314"/>
    <property type="project" value="UniProtKB"/>
</dbReference>
<dbReference type="GO" id="GO:0046209">
    <property type="term" value="P:nitric oxide metabolic process"/>
    <property type="evidence" value="ECO:0000304"/>
    <property type="project" value="Reactome"/>
</dbReference>
<dbReference type="GO" id="GO:0015671">
    <property type="term" value="P:oxygen transport"/>
    <property type="evidence" value="ECO:0000303"/>
    <property type="project" value="UniProtKB"/>
</dbReference>
<dbReference type="GO" id="GO:0019430">
    <property type="term" value="P:removal of superoxide radicals"/>
    <property type="evidence" value="ECO:0000314"/>
    <property type="project" value="UniProtKB"/>
</dbReference>
<dbReference type="GO" id="GO:0001666">
    <property type="term" value="P:response to hypoxia"/>
    <property type="evidence" value="ECO:0007669"/>
    <property type="project" value="Ensembl"/>
</dbReference>
<dbReference type="GO" id="GO:0006979">
    <property type="term" value="P:response to oxidative stress"/>
    <property type="evidence" value="ECO:0000250"/>
    <property type="project" value="UniProtKB"/>
</dbReference>
<dbReference type="CDD" id="cd08924">
    <property type="entry name" value="Cygb"/>
    <property type="match status" value="1"/>
</dbReference>
<dbReference type="FunFam" id="1.10.490.10:FF:000005">
    <property type="entry name" value="Cytoglobin"/>
    <property type="match status" value="1"/>
</dbReference>
<dbReference type="Gene3D" id="1.10.490.10">
    <property type="entry name" value="Globins"/>
    <property type="match status" value="1"/>
</dbReference>
<dbReference type="InterPro" id="IPR000971">
    <property type="entry name" value="Globin"/>
</dbReference>
<dbReference type="InterPro" id="IPR009050">
    <property type="entry name" value="Globin-like_sf"/>
</dbReference>
<dbReference type="InterPro" id="IPR012292">
    <property type="entry name" value="Globin/Proto"/>
</dbReference>
<dbReference type="InterPro" id="IPR013314">
    <property type="entry name" value="Globin_lamprey/hagfish"/>
</dbReference>
<dbReference type="PANTHER" id="PTHR46783">
    <property type="entry name" value="CYTOGLOBIN"/>
    <property type="match status" value="1"/>
</dbReference>
<dbReference type="PANTHER" id="PTHR46783:SF2">
    <property type="entry name" value="CYTOGLOBIN"/>
    <property type="match status" value="1"/>
</dbReference>
<dbReference type="Pfam" id="PF00042">
    <property type="entry name" value="Globin"/>
    <property type="match status" value="1"/>
</dbReference>
<dbReference type="PRINTS" id="PR01906">
    <property type="entry name" value="FISHGLOBIN"/>
</dbReference>
<dbReference type="SUPFAM" id="SSF46458">
    <property type="entry name" value="Globin-like"/>
    <property type="match status" value="1"/>
</dbReference>
<dbReference type="PROSITE" id="PS01033">
    <property type="entry name" value="GLOBIN"/>
    <property type="match status" value="1"/>
</dbReference>
<reference key="1">
    <citation type="journal article" date="2002" name="Mol. Biol. Evol.">
        <title>Cytoglobin: a novel globin type ubiquitously expressed in vertebrate tissues.</title>
        <authorList>
            <person name="Burmester T."/>
            <person name="Ebner B."/>
            <person name="Weich B."/>
            <person name="Hankeln T."/>
        </authorList>
    </citation>
    <scope>NUCLEOTIDE SEQUENCE [MRNA]</scope>
    <scope>TISSUE SPECIFICITY</scope>
    <source>
        <tissue>Brain</tissue>
    </source>
</reference>
<reference key="2">
    <citation type="journal article" date="2002" name="Biochim. Biophys. Acta">
        <title>Characterization of human stellate cell activation-associated protein and its expression in human liver.</title>
        <authorList>
            <person name="Asahina K."/>
            <person name="Kawada N."/>
            <person name="Kristensen D.B."/>
            <person name="Nakatani K."/>
            <person name="Seki S."/>
            <person name="Shiokawa M."/>
            <person name="Tateno C."/>
            <person name="Obara M."/>
            <person name="Yoshizato K."/>
        </authorList>
    </citation>
    <scope>NUCLEOTIDE SEQUENCE [MRNA]</scope>
    <scope>FUNCTION</scope>
    <scope>CATALYTIC ACTIVITY</scope>
    <source>
        <tissue>Heart</tissue>
    </source>
</reference>
<reference key="3">
    <citation type="journal article" date="2004" name="Nat. Genet.">
        <title>Complete sequencing and characterization of 21,243 full-length human cDNAs.</title>
        <authorList>
            <person name="Ota T."/>
            <person name="Suzuki Y."/>
            <person name="Nishikawa T."/>
            <person name="Otsuki T."/>
            <person name="Sugiyama T."/>
            <person name="Irie R."/>
            <person name="Wakamatsu A."/>
            <person name="Hayashi K."/>
            <person name="Sato H."/>
            <person name="Nagai K."/>
            <person name="Kimura K."/>
            <person name="Makita H."/>
            <person name="Sekine M."/>
            <person name="Obayashi M."/>
            <person name="Nishi T."/>
            <person name="Shibahara T."/>
            <person name="Tanaka T."/>
            <person name="Ishii S."/>
            <person name="Yamamoto J."/>
            <person name="Saito K."/>
            <person name="Kawai Y."/>
            <person name="Isono Y."/>
            <person name="Nakamura Y."/>
            <person name="Nagahari K."/>
            <person name="Murakami K."/>
            <person name="Yasuda T."/>
            <person name="Iwayanagi T."/>
            <person name="Wagatsuma M."/>
            <person name="Shiratori A."/>
            <person name="Sudo H."/>
            <person name="Hosoiri T."/>
            <person name="Kaku Y."/>
            <person name="Kodaira H."/>
            <person name="Kondo H."/>
            <person name="Sugawara M."/>
            <person name="Takahashi M."/>
            <person name="Kanda K."/>
            <person name="Yokoi T."/>
            <person name="Furuya T."/>
            <person name="Kikkawa E."/>
            <person name="Omura Y."/>
            <person name="Abe K."/>
            <person name="Kamihara K."/>
            <person name="Katsuta N."/>
            <person name="Sato K."/>
            <person name="Tanikawa M."/>
            <person name="Yamazaki M."/>
            <person name="Ninomiya K."/>
            <person name="Ishibashi T."/>
            <person name="Yamashita H."/>
            <person name="Murakawa K."/>
            <person name="Fujimori K."/>
            <person name="Tanai H."/>
            <person name="Kimata M."/>
            <person name="Watanabe M."/>
            <person name="Hiraoka S."/>
            <person name="Chiba Y."/>
            <person name="Ishida S."/>
            <person name="Ono Y."/>
            <person name="Takiguchi S."/>
            <person name="Watanabe S."/>
            <person name="Yosida M."/>
            <person name="Hotuta T."/>
            <person name="Kusano J."/>
            <person name="Kanehori K."/>
            <person name="Takahashi-Fujii A."/>
            <person name="Hara H."/>
            <person name="Tanase T.-O."/>
            <person name="Nomura Y."/>
            <person name="Togiya S."/>
            <person name="Komai F."/>
            <person name="Hara R."/>
            <person name="Takeuchi K."/>
            <person name="Arita M."/>
            <person name="Imose N."/>
            <person name="Musashino K."/>
            <person name="Yuuki H."/>
            <person name="Oshima A."/>
            <person name="Sasaki N."/>
            <person name="Aotsuka S."/>
            <person name="Yoshikawa Y."/>
            <person name="Matsunawa H."/>
            <person name="Ichihara T."/>
            <person name="Shiohata N."/>
            <person name="Sano S."/>
            <person name="Moriya S."/>
            <person name="Momiyama H."/>
            <person name="Satoh N."/>
            <person name="Takami S."/>
            <person name="Terashima Y."/>
            <person name="Suzuki O."/>
            <person name="Nakagawa S."/>
            <person name="Senoh A."/>
            <person name="Mizoguchi H."/>
            <person name="Goto Y."/>
            <person name="Shimizu F."/>
            <person name="Wakebe H."/>
            <person name="Hishigaki H."/>
            <person name="Watanabe T."/>
            <person name="Sugiyama A."/>
            <person name="Takemoto M."/>
            <person name="Kawakami B."/>
            <person name="Yamazaki M."/>
            <person name="Watanabe K."/>
            <person name="Kumagai A."/>
            <person name="Itakura S."/>
            <person name="Fukuzumi Y."/>
            <person name="Fujimori Y."/>
            <person name="Komiyama M."/>
            <person name="Tashiro H."/>
            <person name="Tanigami A."/>
            <person name="Fujiwara T."/>
            <person name="Ono T."/>
            <person name="Yamada K."/>
            <person name="Fujii Y."/>
            <person name="Ozaki K."/>
            <person name="Hirao M."/>
            <person name="Ohmori Y."/>
            <person name="Kawabata A."/>
            <person name="Hikiji T."/>
            <person name="Kobatake N."/>
            <person name="Inagaki H."/>
            <person name="Ikema Y."/>
            <person name="Okamoto S."/>
            <person name="Okitani R."/>
            <person name="Kawakami T."/>
            <person name="Noguchi S."/>
            <person name="Itoh T."/>
            <person name="Shigeta K."/>
            <person name="Senba T."/>
            <person name="Matsumura K."/>
            <person name="Nakajima Y."/>
            <person name="Mizuno T."/>
            <person name="Morinaga M."/>
            <person name="Sasaki M."/>
            <person name="Togashi T."/>
            <person name="Oyama M."/>
            <person name="Hata H."/>
            <person name="Watanabe M."/>
            <person name="Komatsu T."/>
            <person name="Mizushima-Sugano J."/>
            <person name="Satoh T."/>
            <person name="Shirai Y."/>
            <person name="Takahashi Y."/>
            <person name="Nakagawa K."/>
            <person name="Okumura K."/>
            <person name="Nagase T."/>
            <person name="Nomura N."/>
            <person name="Kikuchi H."/>
            <person name="Masuho Y."/>
            <person name="Yamashita R."/>
            <person name="Nakai K."/>
            <person name="Yada T."/>
            <person name="Nakamura Y."/>
            <person name="Ohara O."/>
            <person name="Isogai T."/>
            <person name="Sugano S."/>
        </authorList>
    </citation>
    <scope>NUCLEOTIDE SEQUENCE [LARGE SCALE MRNA]</scope>
    <source>
        <tissue>Kidney</tissue>
    </source>
</reference>
<reference key="4">
    <citation type="submission" date="2005-07" db="EMBL/GenBank/DDBJ databases">
        <authorList>
            <person name="Mural R.J."/>
            <person name="Istrail S."/>
            <person name="Sutton G.G."/>
            <person name="Florea L."/>
            <person name="Halpern A.L."/>
            <person name="Mobarry C.M."/>
            <person name="Lippert R."/>
            <person name="Walenz B."/>
            <person name="Shatkay H."/>
            <person name="Dew I."/>
            <person name="Miller J.R."/>
            <person name="Flanigan M.J."/>
            <person name="Edwards N.J."/>
            <person name="Bolanos R."/>
            <person name="Fasulo D."/>
            <person name="Halldorsson B.V."/>
            <person name="Hannenhalli S."/>
            <person name="Turner R."/>
            <person name="Yooseph S."/>
            <person name="Lu F."/>
            <person name="Nusskern D.R."/>
            <person name="Shue B.C."/>
            <person name="Zheng X.H."/>
            <person name="Zhong F."/>
            <person name="Delcher A.L."/>
            <person name="Huson D.H."/>
            <person name="Kravitz S.A."/>
            <person name="Mouchard L."/>
            <person name="Reinert K."/>
            <person name="Remington K.A."/>
            <person name="Clark A.G."/>
            <person name="Waterman M.S."/>
            <person name="Eichler E.E."/>
            <person name="Adams M.D."/>
            <person name="Hunkapiller M.W."/>
            <person name="Myers E.W."/>
            <person name="Venter J.C."/>
        </authorList>
    </citation>
    <scope>NUCLEOTIDE SEQUENCE [LARGE SCALE GENOMIC DNA]</scope>
</reference>
<reference key="5">
    <citation type="journal article" date="2004" name="Genome Res.">
        <title>The status, quality, and expansion of the NIH full-length cDNA project: the Mammalian Gene Collection (MGC).</title>
        <authorList>
            <consortium name="The MGC Project Team"/>
        </authorList>
    </citation>
    <scope>NUCLEOTIDE SEQUENCE [LARGE SCALE MRNA]</scope>
    <source>
        <tissue>Brain</tissue>
    </source>
</reference>
<reference key="6">
    <citation type="journal article" date="2002" name="J. Biol. Chem.">
        <title>A ubiquitously expressed human hexacoordinate hemoglobin.</title>
        <authorList>
            <person name="Trent J.T. III"/>
            <person name="Hargrove M.S."/>
        </authorList>
    </citation>
    <scope>FUNCTION</scope>
    <scope>TISSUE SPECIFICITY</scope>
</reference>
<reference key="7">
    <citation type="journal article" date="2004" name="J. Biol. Chem.">
        <title>Cytoglobin is a respiratory protein in connective tissue and neurons, which is up-regulated by hypoxia.</title>
        <authorList>
            <person name="Schmidt M."/>
            <person name="Gerlach F."/>
            <person name="Avivi A."/>
            <person name="Laufs T."/>
            <person name="Wystub S."/>
            <person name="Simpson J.C."/>
            <person name="Nevo E."/>
            <person name="Saaler-Reinhardt S."/>
            <person name="Reuss S."/>
            <person name="Hankeln T."/>
            <person name="Burmester T."/>
        </authorList>
    </citation>
    <scope>SUBCELLULAR LOCATION</scope>
    <scope>TISSUE SPECIFICITY</scope>
</reference>
<reference key="8">
    <citation type="journal article" date="2004" name="J. Biol. Chem.">
        <title>Allosteric regulation and temperature dependence of oxygen binding in human neuroglobin and cytoglobin. Molecular mechanisms and physiological significance.</title>
        <authorList>
            <person name="Fago A."/>
            <person name="Hundahl C."/>
            <person name="Dewilde S."/>
            <person name="Gilany K."/>
            <person name="Moens L."/>
            <person name="Weber R.E."/>
        </authorList>
    </citation>
    <scope>FUNCTION</scope>
</reference>
<reference key="9">
    <citation type="journal article" date="2009" name="J. Biol. Chem.">
        <title>Cytoglobin is expressed in the vasculature and regulates cell respiration and proliferation via nitric oxide dioxygenation.</title>
        <authorList>
            <person name="Halligan K.E."/>
            <person name="Jourd'heuil F.L."/>
            <person name="Jourd'heuil D."/>
        </authorList>
    </citation>
    <scope>FUNCTION</scope>
</reference>
<reference key="10">
    <citation type="journal article" date="2010" name="FEBS J.">
        <title>Cytoglobin conformations and disulfide bond formation.</title>
        <authorList>
            <person name="Lechauve C."/>
            <person name="Chauvierre C."/>
            <person name="Dewilde S."/>
            <person name="Moens L."/>
            <person name="Green B.N."/>
            <person name="Marden M.C."/>
            <person name="Celier C."/>
            <person name="Kiger L."/>
        </authorList>
    </citation>
    <scope>FUNCTION</scope>
    <scope>SUBUNIT</scope>
    <scope>DISULFIDE BOND</scope>
</reference>
<reference key="11">
    <citation type="journal article" date="2010" name="J. Biol. Chem.">
        <title>Nitric-oxide dioxygenase function of human cytoglobin with cellular reductants and in rat hepatocytes.</title>
        <authorList>
            <person name="Gardner A.M."/>
            <person name="Cook M.R."/>
            <person name="Gardner P.R."/>
        </authorList>
    </citation>
    <scope>FUNCTION</scope>
    <scope>CATALYTIC ACTIVITY</scope>
</reference>
<reference key="12">
    <citation type="journal article" date="2017" name="Biochemistry">
        <title>Efficient Reduction of Vertebrate Cytoglobins by the Cytochrome b5/Cytochrome b5 Reductase/NADH System.</title>
        <authorList>
            <person name="Amdahl M.B."/>
            <person name="Sparacino-Watkins C.E."/>
            <person name="Corti P."/>
            <person name="Gladwin M.T."/>
            <person name="Tejero J."/>
        </authorList>
    </citation>
    <scope>FUNCTION</scope>
    <scope>CATALYTIC ACTIVITY</scope>
    <scope>ACTIVITY REGULATION</scope>
</reference>
<reference key="13">
    <citation type="journal article" date="2017" name="Nat. Commun.">
        <title>Cytoglobin regulates blood pressure and vascular tone through nitric oxide metabolism in the vascular wall.</title>
        <authorList>
            <person name="Liu X."/>
            <person name="El-Mahdy M.A."/>
            <person name="Boslett J."/>
            <person name="Varadharaj S."/>
            <person name="Hemann C."/>
            <person name="Abdelghany T.M."/>
            <person name="Ismail R.S."/>
            <person name="Little S.C."/>
            <person name="Zhou D."/>
            <person name="Thuy L.T."/>
            <person name="Kawada N."/>
            <person name="Zweier J.L."/>
        </authorList>
    </citation>
    <scope>FUNCTION</scope>
    <scope>CATALYTIC ACTIVITY</scope>
</reference>
<reference key="14">
    <citation type="journal article" date="2018" name="Nitric Oxide">
        <title>Strong modulation of nitrite reductase activity of cytoglobin by disulfide bond oxidation: Implications for nitric oxide homeostasis.</title>
        <authorList>
            <person name="Reeder B.J."/>
            <person name="Ukeri J."/>
        </authorList>
    </citation>
    <scope>FUNCTION</scope>
    <scope>CATALYTIC ACTIVITY</scope>
    <scope>DISULFIDE BOND</scope>
    <scope>MUTAGENESIS OF CYS-38 AND CYS-83</scope>
</reference>
<reference key="15">
    <citation type="journal article" date="2021" name="Hepatology">
        <title>Hexa Histidine-Tagged Recombinant Human Cytoglobin Deactivates Hepatic Stellate Cells and Inhibits Liver Fibrosis by Scavenging Reactive Oxygen Species.</title>
        <authorList>
            <person name="Dat N.Q."/>
            <person name="Thuy L.T.T."/>
            <person name="Hieu V.N."/>
            <person name="Hai H."/>
            <person name="Hoang D.V."/>
            <person name="Thi Thanh Hai N."/>
            <person name="Thuy T.T.V."/>
            <person name="Komiya T."/>
            <person name="Rombouts K."/>
            <person name="Dong M.P."/>
            <person name="Hanh N.V."/>
            <person name="Hoang T.H."/>
            <person name="Sato-Matsubara M."/>
            <person name="Daikoku A."/>
            <person name="Kadono C."/>
            <person name="Oikawa D."/>
            <person name="Yoshizato K."/>
            <person name="Tokunaga F."/>
            <person name="Pinzani M."/>
            <person name="Kawada N."/>
        </authorList>
    </citation>
    <scope>FUNCTION</scope>
</reference>
<reference key="16">
    <citation type="journal article" date="2021" name="Proc. Natl. Acad. Sci. U.S.A.">
        <title>Cytoglobin has potent superoxide dismutase function.</title>
        <authorList>
            <person name="Zweier J.L."/>
            <person name="Hemann C."/>
            <person name="Kundu T."/>
            <person name="Ewees M.G."/>
            <person name="Khaleel S.A."/>
            <person name="Samouilov A."/>
            <person name="Ilangovan G."/>
            <person name="El-Mahdy M.A."/>
        </authorList>
    </citation>
    <scope>FUNCTION</scope>
    <scope>CATALYTIC ACTIVITY</scope>
    <scope>SUBCELLULAR LOCATION</scope>
</reference>
<reference evidence="31 33" key="17">
    <citation type="journal article" date="2004" name="Biochem. Biophys. Res. Commun.">
        <title>Mapping protein matrix cavities in human cytoglobin through Xe atom binding.</title>
        <authorList>
            <person name="de Sanctis D."/>
            <person name="Dewilde S."/>
            <person name="Pesce A."/>
            <person name="Moens L."/>
            <person name="Ascenzi P."/>
            <person name="Hankeln T."/>
            <person name="Burmester T."/>
            <person name="Bolognesi M."/>
        </authorList>
    </citation>
    <scope>X-RAY CRYSTALLOGRAPHY (2.4 ANGSTROMS) OF MUTANT SER-38 AND SER-83</scope>
    <scope>SUBUNIT</scope>
</reference>
<reference evidence="29 30 32" key="18">
    <citation type="journal article" date="2004" name="J. Mol. Biol.">
        <title>Crystal structure of cytoglobin: the fourth globin type discovered in man displays heme hexa-coordination.</title>
        <authorList>
            <person name="de Sanctis D."/>
            <person name="Dewilde S."/>
            <person name="Pesce A."/>
            <person name="Moens L."/>
            <person name="Ascenzi P."/>
            <person name="Hankeln T."/>
            <person name="Burmester T."/>
            <person name="Bolognesi M."/>
        </authorList>
    </citation>
    <scope>X-RAY CRYSTALLOGRAPHY (2.1 ANGSTROMS) OF MUTANT SER-38 AND SER-83</scope>
    <scope>SUBUNIT</scope>
    <scope>MUTAGENESIS OF CYS-38 AND CYS-83</scope>
</reference>
<reference evidence="34" key="19">
    <citation type="journal article" date="2004" name="J. Mol. Biol.">
        <title>Structural basis of human cytoglobin for ligand binding.</title>
        <authorList>
            <person name="Sugimoto H."/>
            <person name="Makino M."/>
            <person name="Sawai H."/>
            <person name="Kawada N."/>
            <person name="Yoshizato K."/>
            <person name="Shiro Y."/>
        </authorList>
    </citation>
    <scope>X-RAY CRYSTALLOGRAPHY (2.4 ANGSTROMS) OF FERRIC FORM</scope>
    <scope>FUNCTION</scope>
    <scope>SUBUNIT</scope>
    <scope>DISULFIDE BOND</scope>
    <scope>MUTAGENESIS OF CYS-38 AND CYS-83</scope>
</reference>
<reference evidence="35" key="20">
    <citation type="journal article" date="2006" name="Acta Crystallogr. D">
        <title>High-resolution structure of human cytoglobin: identification of extra N- and C-termini and a new dimerization mode.</title>
        <authorList>
            <person name="Makino M."/>
            <person name="Sugimoto H."/>
            <person name="Sawai H."/>
            <person name="Kawada N."/>
            <person name="Yoshizato K."/>
            <person name="Shiro Y."/>
        </authorList>
    </citation>
    <scope>X-RAY CRYSTALLOGRAPHY (1.68 ANGSTROMS)</scope>
    <scope>SUBUNIT</scope>
    <scope>DISULFIDE BONDS</scope>
</reference>
<protein>
    <recommendedName>
        <fullName evidence="20">Cytoglobin</fullName>
    </recommendedName>
    <alternativeName>
        <fullName evidence="19">Histoglobin</fullName>
        <shortName evidence="19">HGb</shortName>
    </alternativeName>
    <alternativeName>
        <fullName evidence="25">Nitric oxygen dioxygenase CYGB</fullName>
        <shortName evidence="22">NOD</shortName>
        <ecNumber evidence="12">1.14.12.-</ecNumber>
    </alternativeName>
    <alternativeName>
        <fullName evidence="26">Nitrite reductase CYGB</fullName>
        <ecNumber evidence="16">1.7.-.-</ecNumber>
    </alternativeName>
    <alternativeName>
        <fullName evidence="24">Pseudoperoxidase CYGB</fullName>
        <ecNumber evidence="4">1.11.1.-</ecNumber>
    </alternativeName>
    <alternativeName>
        <fullName evidence="21">Stellate cell activation-associated protein</fullName>
    </alternativeName>
    <alternativeName>
        <fullName evidence="27">Superoxide dismutase CYGB</fullName>
        <ecNumber evidence="18">1.15.1.1</ecNumber>
    </alternativeName>
</protein>
<feature type="chain" id="PRO_0000053384" description="Cytoglobin">
    <location>
        <begin position="1"/>
        <end position="190"/>
    </location>
</feature>
<feature type="domain" description="Globin" evidence="1">
    <location>
        <begin position="18"/>
        <end position="167"/>
    </location>
</feature>
<feature type="binding site" description="distal binding residue" evidence="1 6 7 8 10 30 31 32 33 34 35">
    <location>
        <position position="81"/>
    </location>
    <ligand>
        <name>heme b</name>
        <dbReference type="ChEBI" id="CHEBI:60344"/>
    </ligand>
    <ligandPart>
        <name>Fe</name>
        <dbReference type="ChEBI" id="CHEBI:18248"/>
    </ligandPart>
</feature>
<feature type="binding site" description="proximal binding residue" evidence="1 6 7 8 10 29 30 31 32 33 34 35">
    <location>
        <position position="113"/>
    </location>
    <ligand>
        <name>heme b</name>
        <dbReference type="ChEBI" id="CHEBI:60344"/>
    </ligand>
    <ligandPart>
        <name>Fe</name>
        <dbReference type="ChEBI" id="CHEBI:18248"/>
    </ligandPart>
</feature>
<feature type="disulfide bond" description="Redox-active; in monomeric form" evidence="10 35">
    <location>
        <begin position="38"/>
        <end position="83"/>
    </location>
</feature>
<feature type="disulfide bond" description="Interchain (with C-83); in dimeric form" evidence="10 35">
    <location>
        <position position="38"/>
    </location>
</feature>
<feature type="disulfide bond" description="Interchain (with C-38); in dimeric form" evidence="10 35">
    <location>
        <position position="83"/>
    </location>
</feature>
<feature type="mutagenesis site" description="Decreased nitrite reductase activity; when associated with R-83." evidence="16">
    <original>C</original>
    <variation>R</variation>
    <location>
        <position position="38"/>
    </location>
</feature>
<feature type="mutagenesis site" description="Loss of interchain disulfide bond and loss of solubility but no effect on homodimerization; when associated with S-83." evidence="7 8">
    <original>C</original>
    <variation>S</variation>
    <location>
        <position position="38"/>
    </location>
</feature>
<feature type="mutagenesis site" description="Decreased nitrite reductase activity; when associated with R-38." evidence="16">
    <original>C</original>
    <variation>R</variation>
    <location>
        <position position="83"/>
    </location>
</feature>
<feature type="mutagenesis site" description="Loss of interchain disulfide bond and loss of solubility but no effect on homodimerization; when associated with S-38." evidence="7">
    <original>C</original>
    <variation>S</variation>
    <location>
        <position position="83"/>
    </location>
</feature>
<feature type="sequence conflict" description="In Ref. 5; AAH29798." evidence="23" ref="5">
    <original>N</original>
    <variation>S</variation>
    <location>
        <position position="37"/>
    </location>
</feature>
<feature type="helix" evidence="36">
    <location>
        <begin position="7"/>
        <end position="15"/>
    </location>
</feature>
<feature type="helix" evidence="36">
    <location>
        <begin position="21"/>
        <end position="35"/>
    </location>
</feature>
<feature type="helix" evidence="36">
    <location>
        <begin position="38"/>
        <end position="52"/>
    </location>
</feature>
<feature type="helix" evidence="36">
    <location>
        <begin position="54"/>
        <end position="59"/>
    </location>
</feature>
<feature type="turn" evidence="36">
    <location>
        <begin position="61"/>
        <end position="65"/>
    </location>
</feature>
<feature type="helix" evidence="36">
    <location>
        <begin position="69"/>
        <end position="72"/>
    </location>
</feature>
<feature type="helix" evidence="36">
    <location>
        <begin position="76"/>
        <end position="94"/>
    </location>
</feature>
<feature type="turn" evidence="36">
    <location>
        <begin position="95"/>
        <end position="97"/>
    </location>
</feature>
<feature type="helix" evidence="36">
    <location>
        <begin position="99"/>
        <end position="115"/>
    </location>
</feature>
<feature type="helix" evidence="36">
    <location>
        <begin position="121"/>
        <end position="138"/>
    </location>
</feature>
<feature type="helix" evidence="36">
    <location>
        <begin position="140"/>
        <end position="142"/>
    </location>
</feature>
<feature type="helix" evidence="36">
    <location>
        <begin position="145"/>
        <end position="168"/>
    </location>
</feature>
<comment type="function">
    <text evidence="2 4 8 9 11 12 13 14 15 16 17 18">Probable multifunctional globin with a hexacoordinated heme iron required for the catalysis of various reactions depending on redox condition of the cell as well as oxygen availability (PubMed:11893755, PubMed:12359339, PubMed:15165856, PubMed:19147491, PubMed:20511233, PubMed:28393874, PubMed:28671819, PubMed:29128400, PubMed:33576020, PubMed:34930834). Has a nitric oxide dioxygenase (NOD) activity and is most probably involved in cell-mediated and oxygen-dependent nitric oxide consumption (PubMed:19147491, PubMed:20511233, PubMed:28393874, PubMed:28671819). By scavenging this second messenger may regulate several biological processes including endothelium-mediated vasodilation and vascular tone (PubMed:19147491, PubMed:28393874). Under normoxic conditions functions as a nitric oxide dioxygenase (NOD) but under hypoxic conditions the globin may switch its function to that of a nitrite (NO2) reductase (NiR), generating nitric oxide (PubMed:29128400). Could also have peroxidase and superoxide dismutase activities, detoxifying reactive oxygen species and protecting cells against oxidative stress (PubMed:12359339, PubMed:33576020, PubMed:34930834). Also binds dioxygen with low affinity and could function as an oxygen sensor but has probably no function as a respiratory oxygen carrier (PubMed:11893755, PubMed:15299006, PubMed:20553503).</text>
</comment>
<comment type="catalytic activity">
    <reaction evidence="12 14 15">
        <text>Fe(II)-heme b-[protein] + nitric oxide + O2 = Fe(III)-heme b-[protein] + nitrate</text>
        <dbReference type="Rhea" id="RHEA:78091"/>
        <dbReference type="Rhea" id="RHEA-COMP:18975"/>
        <dbReference type="Rhea" id="RHEA-COMP:18976"/>
        <dbReference type="ChEBI" id="CHEBI:15379"/>
        <dbReference type="ChEBI" id="CHEBI:16480"/>
        <dbReference type="ChEBI" id="CHEBI:17632"/>
        <dbReference type="ChEBI" id="CHEBI:55376"/>
        <dbReference type="ChEBI" id="CHEBI:60344"/>
    </reaction>
    <physiologicalReaction direction="left-to-right" evidence="14">
        <dbReference type="Rhea" id="RHEA:78092"/>
    </physiologicalReaction>
</comment>
<comment type="catalytic activity">
    <reaction evidence="16">
        <text>Fe(III)-heme b-[protein] + nitric oxide + H2O = Fe(II)-heme b-[protein] + nitrite + 2 H(+)</text>
        <dbReference type="Rhea" id="RHEA:77711"/>
        <dbReference type="Rhea" id="RHEA-COMP:18975"/>
        <dbReference type="Rhea" id="RHEA-COMP:18976"/>
        <dbReference type="ChEBI" id="CHEBI:15377"/>
        <dbReference type="ChEBI" id="CHEBI:15378"/>
        <dbReference type="ChEBI" id="CHEBI:16301"/>
        <dbReference type="ChEBI" id="CHEBI:16480"/>
        <dbReference type="ChEBI" id="CHEBI:55376"/>
        <dbReference type="ChEBI" id="CHEBI:60344"/>
    </reaction>
    <physiologicalReaction direction="right-to-left" evidence="26">
        <dbReference type="Rhea" id="RHEA:77713"/>
    </physiologicalReaction>
</comment>
<comment type="catalytic activity">
    <reaction evidence="18">
        <text>2 superoxide + 2 H(+) = H2O2 + O2</text>
        <dbReference type="Rhea" id="RHEA:20696"/>
        <dbReference type="ChEBI" id="CHEBI:15378"/>
        <dbReference type="ChEBI" id="CHEBI:15379"/>
        <dbReference type="ChEBI" id="CHEBI:16240"/>
        <dbReference type="ChEBI" id="CHEBI:18421"/>
        <dbReference type="EC" id="1.15.1.1"/>
    </reaction>
    <physiologicalReaction direction="left-to-right" evidence="18">
        <dbReference type="Rhea" id="RHEA:20697"/>
    </physiologicalReaction>
</comment>
<comment type="catalytic activity">
    <reaction evidence="24">
        <text>H2O2 + AH2 = A + 2 H2O</text>
        <dbReference type="Rhea" id="RHEA:30275"/>
        <dbReference type="ChEBI" id="CHEBI:13193"/>
        <dbReference type="ChEBI" id="CHEBI:15377"/>
        <dbReference type="ChEBI" id="CHEBI:16240"/>
        <dbReference type="ChEBI" id="CHEBI:17499"/>
    </reaction>
    <physiologicalReaction direction="left-to-right" evidence="24">
        <dbReference type="Rhea" id="RHEA:30276"/>
    </physiologicalReaction>
</comment>
<comment type="activity regulation">
    <text evidence="15">The nitric oxide dioxygenase activity is activated by a reducing system composed of cytochrome b5, its upstream reductase CYB5R3 and NADH.</text>
</comment>
<comment type="subunit">
    <text evidence="6 8 10 13">Monomeric (PubMed:20553503). Homodimer; disulfide-linked in vitro (PubMed:15044115, PubMed:15165856, PubMed:16699195). Also homooligomeric in vitro (PubMed:15165856).</text>
</comment>
<comment type="interaction">
    <interactant intactId="EBI-6309037">
        <id>Q8WWM9</id>
    </interactant>
    <interactant intactId="EBI-748855">
        <id>O43488</id>
        <label>AKR7A2</label>
    </interactant>
    <organismsDiffer>false</organismsDiffer>
    <experiments>3</experiments>
</comment>
<comment type="interaction">
    <interactant intactId="EBI-6309037">
        <id>Q8WWM9</id>
    </interactant>
    <interactant intactId="EBI-9523517">
        <id>P85298-4</id>
        <label>ARHGAP8</label>
    </interactant>
    <organismsDiffer>false</organismsDiffer>
    <experiments>3</experiments>
</comment>
<comment type="interaction">
    <interactant intactId="EBI-6309037">
        <id>Q8WWM9</id>
    </interactant>
    <interactant intactId="EBI-748248">
        <id>Q8WTU0</id>
        <label>DDI1</label>
    </interactant>
    <organismsDiffer>false</organismsDiffer>
    <experiments>6</experiments>
</comment>
<comment type="interaction">
    <interactant intactId="EBI-6309037">
        <id>Q8WWM9</id>
    </interactant>
    <interactant intactId="EBI-11477916">
        <id>Q96KN4</id>
        <label>LRATD1</label>
    </interactant>
    <organismsDiffer>false</organismsDiffer>
    <experiments>3</experiments>
</comment>
<comment type="interaction">
    <interactant intactId="EBI-6309037">
        <id>Q8WWM9</id>
    </interactant>
    <interactant intactId="EBI-2637198">
        <id>Q08AG7</id>
        <label>MZT1</label>
    </interactant>
    <organismsDiffer>false</organismsDiffer>
    <experiments>3</experiments>
</comment>
<comment type="interaction">
    <interactant intactId="EBI-6309037">
        <id>Q8WWM9</id>
    </interactant>
    <interactant intactId="EBI-17437404">
        <id>B1AHC3</id>
        <label>PRR5-ARHGAP8</label>
    </interactant>
    <organismsDiffer>false</organismsDiffer>
    <experiments>3</experiments>
</comment>
<comment type="subcellular location">
    <subcellularLocation>
        <location evidence="5 18">Cytoplasm</location>
    </subcellularLocation>
    <subcellularLocation>
        <location evidence="5">Nucleus</location>
    </subcellularLocation>
</comment>
<comment type="tissue specificity">
    <text evidence="2 3 5">Widely expressed. Highest expression in heart, stomach, bladder and small intestine.</text>
</comment>
<comment type="PTM">
    <text evidence="16">The formation of an intramolecular disulfide bond between cysteines Cys-38 and Cys-83 specifically enhances the nitrite reductase activity.</text>
</comment>
<comment type="similarity">
    <text evidence="1">Belongs to the globin family.</text>
</comment>